<keyword id="KW-0119">Carbohydrate metabolism</keyword>
<keyword id="KW-0456">Lyase</keyword>
<keyword id="KW-1185">Reference proteome</keyword>
<evidence type="ECO:0000255" key="1">
    <source>
        <dbReference type="HAMAP-Rule" id="MF_00068"/>
    </source>
</evidence>
<name>MURQ_BACAN</name>
<reference key="1">
    <citation type="journal article" date="2003" name="Nature">
        <title>The genome sequence of Bacillus anthracis Ames and comparison to closely related bacteria.</title>
        <authorList>
            <person name="Read T.D."/>
            <person name="Peterson S.N."/>
            <person name="Tourasse N.J."/>
            <person name="Baillie L.W."/>
            <person name="Paulsen I.T."/>
            <person name="Nelson K.E."/>
            <person name="Tettelin H."/>
            <person name="Fouts D.E."/>
            <person name="Eisen J.A."/>
            <person name="Gill S.R."/>
            <person name="Holtzapple E.K."/>
            <person name="Okstad O.A."/>
            <person name="Helgason E."/>
            <person name="Rilstone J."/>
            <person name="Wu M."/>
            <person name="Kolonay J.F."/>
            <person name="Beanan M.J."/>
            <person name="Dodson R.J."/>
            <person name="Brinkac L.M."/>
            <person name="Gwinn M.L."/>
            <person name="DeBoy R.T."/>
            <person name="Madpu R."/>
            <person name="Daugherty S.C."/>
            <person name="Durkin A.S."/>
            <person name="Haft D.H."/>
            <person name="Nelson W.C."/>
            <person name="Peterson J.D."/>
            <person name="Pop M."/>
            <person name="Khouri H.M."/>
            <person name="Radune D."/>
            <person name="Benton J.L."/>
            <person name="Mahamoud Y."/>
            <person name="Jiang L."/>
            <person name="Hance I.R."/>
            <person name="Weidman J.F."/>
            <person name="Berry K.J."/>
            <person name="Plaut R.D."/>
            <person name="Wolf A.M."/>
            <person name="Watkins K.L."/>
            <person name="Nierman W.C."/>
            <person name="Hazen A."/>
            <person name="Cline R.T."/>
            <person name="Redmond C."/>
            <person name="Thwaite J.E."/>
            <person name="White O."/>
            <person name="Salzberg S.L."/>
            <person name="Thomason B."/>
            <person name="Friedlander A.M."/>
            <person name="Koehler T.M."/>
            <person name="Hanna P.C."/>
            <person name="Kolstoe A.-B."/>
            <person name="Fraser C.M."/>
        </authorList>
    </citation>
    <scope>NUCLEOTIDE SEQUENCE [LARGE SCALE GENOMIC DNA]</scope>
    <source>
        <strain>Ames / isolate Porton</strain>
    </source>
</reference>
<reference key="2">
    <citation type="submission" date="2004-01" db="EMBL/GenBank/DDBJ databases">
        <title>Complete genome sequence of Bacillus anthracis Sterne.</title>
        <authorList>
            <person name="Brettin T.S."/>
            <person name="Bruce D."/>
            <person name="Challacombe J.F."/>
            <person name="Gilna P."/>
            <person name="Han C."/>
            <person name="Hill K."/>
            <person name="Hitchcock P."/>
            <person name="Jackson P."/>
            <person name="Keim P."/>
            <person name="Longmire J."/>
            <person name="Lucas S."/>
            <person name="Okinaka R."/>
            <person name="Richardson P."/>
            <person name="Rubin E."/>
            <person name="Tice H."/>
        </authorList>
    </citation>
    <scope>NUCLEOTIDE SEQUENCE [LARGE SCALE GENOMIC DNA]</scope>
    <source>
        <strain>Sterne</strain>
    </source>
</reference>
<reference key="3">
    <citation type="journal article" date="2009" name="J. Bacteriol.">
        <title>The complete genome sequence of Bacillus anthracis Ames 'Ancestor'.</title>
        <authorList>
            <person name="Ravel J."/>
            <person name="Jiang L."/>
            <person name="Stanley S.T."/>
            <person name="Wilson M.R."/>
            <person name="Decker R.S."/>
            <person name="Read T.D."/>
            <person name="Worsham P."/>
            <person name="Keim P.S."/>
            <person name="Salzberg S.L."/>
            <person name="Fraser-Liggett C.M."/>
            <person name="Rasko D.A."/>
        </authorList>
    </citation>
    <scope>NUCLEOTIDE SEQUENCE [LARGE SCALE GENOMIC DNA]</scope>
    <source>
        <strain>Ames ancestor</strain>
    </source>
</reference>
<protein>
    <recommendedName>
        <fullName evidence="1">N-acetylmuramic acid 6-phosphate etherase</fullName>
        <shortName evidence="1">MurNAc-6-P etherase</shortName>
        <ecNumber evidence="1">4.2.1.126</ecNumber>
    </recommendedName>
    <alternativeName>
        <fullName evidence="1">N-acetylmuramic acid 6-phosphate hydrolase</fullName>
    </alternativeName>
    <alternativeName>
        <fullName evidence="1">N-acetylmuramic acid 6-phosphate lyase</fullName>
    </alternativeName>
</protein>
<proteinExistence type="inferred from homology"/>
<sequence length="294" mass="31979">MLENLSTEHRNEKTMNLDEMNIKEVLQSMNEEDRTVALAVEKEIEHIEKVVRVVIQSFEEEGRLIYIGAGTSGRLGILDAVECPPTFGTDDKMVQGFIAGGLKAFTKAVEGAEDREELAEEDLKSIGLNEKDTVIGIAASGRTPYVIGGLKYANSVGASTASISCNKNAEISKYAKLNVEVETGAEILTGSTRLKAGTAQKLVLNMISTASMIGVGKVYKNLMVDVQSTNEKLVERSKRIIVEATGVSYEVAAEHYEKAERNVKAAIVMVLLQCEYGEALEKLKQAKGFVKKAL</sequence>
<organism>
    <name type="scientific">Bacillus anthracis</name>
    <dbReference type="NCBI Taxonomy" id="1392"/>
    <lineage>
        <taxon>Bacteria</taxon>
        <taxon>Bacillati</taxon>
        <taxon>Bacillota</taxon>
        <taxon>Bacilli</taxon>
        <taxon>Bacillales</taxon>
        <taxon>Bacillaceae</taxon>
        <taxon>Bacillus</taxon>
        <taxon>Bacillus cereus group</taxon>
    </lineage>
</organism>
<accession>Q81UP1</accession>
<accession>Q6I2X1</accession>
<accession>Q6KWP7</accession>
<dbReference type="EC" id="4.2.1.126" evidence="1"/>
<dbReference type="EMBL" id="AE016879">
    <property type="protein sequence ID" value="AAP24826.1"/>
    <property type="molecule type" value="Genomic_DNA"/>
</dbReference>
<dbReference type="EMBL" id="AE017225">
    <property type="protein sequence ID" value="AAT53110.1"/>
    <property type="molecule type" value="Genomic_DNA"/>
</dbReference>
<dbReference type="EMBL" id="AE017334">
    <property type="protein sequence ID" value="AAT29935.1"/>
    <property type="molecule type" value="Genomic_DNA"/>
</dbReference>
<dbReference type="RefSeq" id="NP_843340.1">
    <property type="nucleotide sequence ID" value="NC_003997.3"/>
</dbReference>
<dbReference type="RefSeq" id="WP_000892332.1">
    <property type="nucleotide sequence ID" value="NZ_WXXJ01000029.1"/>
</dbReference>
<dbReference type="RefSeq" id="YP_027059.1">
    <property type="nucleotide sequence ID" value="NC_005945.1"/>
</dbReference>
<dbReference type="SMR" id="Q81UP1"/>
<dbReference type="IntAct" id="Q81UP1">
    <property type="interactions" value="1"/>
</dbReference>
<dbReference type="STRING" id="261594.GBAA_0822"/>
<dbReference type="DNASU" id="1088696"/>
<dbReference type="GeneID" id="45020894"/>
<dbReference type="KEGG" id="ban:BA_0822"/>
<dbReference type="KEGG" id="bar:GBAA_0822"/>
<dbReference type="KEGG" id="bat:BAS0783"/>
<dbReference type="PATRIC" id="fig|198094.11.peg.824"/>
<dbReference type="eggNOG" id="COG2103">
    <property type="taxonomic scope" value="Bacteria"/>
</dbReference>
<dbReference type="HOGENOM" id="CLU_049049_1_1_9"/>
<dbReference type="OMA" id="CPPTFCT"/>
<dbReference type="OrthoDB" id="9813395at2"/>
<dbReference type="UniPathway" id="UPA00342"/>
<dbReference type="Proteomes" id="UP000000427">
    <property type="component" value="Chromosome"/>
</dbReference>
<dbReference type="Proteomes" id="UP000000594">
    <property type="component" value="Chromosome"/>
</dbReference>
<dbReference type="GO" id="GO:0097367">
    <property type="term" value="F:carbohydrate derivative binding"/>
    <property type="evidence" value="ECO:0007669"/>
    <property type="project" value="InterPro"/>
</dbReference>
<dbReference type="GO" id="GO:0016835">
    <property type="term" value="F:carbon-oxygen lyase activity"/>
    <property type="evidence" value="ECO:0007669"/>
    <property type="project" value="UniProtKB-UniRule"/>
</dbReference>
<dbReference type="GO" id="GO:0016803">
    <property type="term" value="F:ether hydrolase activity"/>
    <property type="evidence" value="ECO:0007669"/>
    <property type="project" value="TreeGrafter"/>
</dbReference>
<dbReference type="GO" id="GO:0046348">
    <property type="term" value="P:amino sugar catabolic process"/>
    <property type="evidence" value="ECO:0007669"/>
    <property type="project" value="InterPro"/>
</dbReference>
<dbReference type="GO" id="GO:0097173">
    <property type="term" value="P:N-acetylmuramic acid catabolic process"/>
    <property type="evidence" value="ECO:0007669"/>
    <property type="project" value="UniProtKB-UniPathway"/>
</dbReference>
<dbReference type="GO" id="GO:0009254">
    <property type="term" value="P:peptidoglycan turnover"/>
    <property type="evidence" value="ECO:0007669"/>
    <property type="project" value="TreeGrafter"/>
</dbReference>
<dbReference type="CDD" id="cd05007">
    <property type="entry name" value="SIS_Etherase"/>
    <property type="match status" value="1"/>
</dbReference>
<dbReference type="FunFam" id="1.10.8.1080:FF:000001">
    <property type="entry name" value="N-acetylmuramic acid 6-phosphate etherase"/>
    <property type="match status" value="1"/>
</dbReference>
<dbReference type="FunFam" id="3.40.50.10490:FF:000014">
    <property type="entry name" value="N-acetylmuramic acid 6-phosphate etherase"/>
    <property type="match status" value="1"/>
</dbReference>
<dbReference type="Gene3D" id="1.10.8.1080">
    <property type="match status" value="1"/>
</dbReference>
<dbReference type="Gene3D" id="3.40.50.10490">
    <property type="entry name" value="Glucose-6-phosphate isomerase like protein, domain 1"/>
    <property type="match status" value="1"/>
</dbReference>
<dbReference type="HAMAP" id="MF_00068">
    <property type="entry name" value="MurQ"/>
    <property type="match status" value="1"/>
</dbReference>
<dbReference type="InterPro" id="IPR005488">
    <property type="entry name" value="Etherase_MurQ"/>
</dbReference>
<dbReference type="InterPro" id="IPR005486">
    <property type="entry name" value="Glucokinase_regulatory_CS"/>
</dbReference>
<dbReference type="InterPro" id="IPR040190">
    <property type="entry name" value="MURQ/GCKR"/>
</dbReference>
<dbReference type="InterPro" id="IPR001347">
    <property type="entry name" value="SIS_dom"/>
</dbReference>
<dbReference type="InterPro" id="IPR046348">
    <property type="entry name" value="SIS_dom_sf"/>
</dbReference>
<dbReference type="NCBIfam" id="TIGR00274">
    <property type="entry name" value="N-acetylmuramic acid 6-phosphate etherase"/>
    <property type="match status" value="1"/>
</dbReference>
<dbReference type="NCBIfam" id="NF003915">
    <property type="entry name" value="PRK05441.1"/>
    <property type="match status" value="1"/>
</dbReference>
<dbReference type="NCBIfam" id="NF009222">
    <property type="entry name" value="PRK12570.1"/>
    <property type="match status" value="1"/>
</dbReference>
<dbReference type="PANTHER" id="PTHR10088">
    <property type="entry name" value="GLUCOKINASE REGULATORY PROTEIN"/>
    <property type="match status" value="1"/>
</dbReference>
<dbReference type="PANTHER" id="PTHR10088:SF4">
    <property type="entry name" value="GLUCOKINASE REGULATORY PROTEIN"/>
    <property type="match status" value="1"/>
</dbReference>
<dbReference type="Pfam" id="PF22645">
    <property type="entry name" value="GKRP_SIS_N"/>
    <property type="match status" value="1"/>
</dbReference>
<dbReference type="SUPFAM" id="SSF53697">
    <property type="entry name" value="SIS domain"/>
    <property type="match status" value="1"/>
</dbReference>
<dbReference type="PROSITE" id="PS01272">
    <property type="entry name" value="GCKR"/>
    <property type="match status" value="1"/>
</dbReference>
<dbReference type="PROSITE" id="PS51464">
    <property type="entry name" value="SIS"/>
    <property type="match status" value="1"/>
</dbReference>
<gene>
    <name evidence="1" type="primary">murQ</name>
    <name type="ordered locus">BA_0822</name>
    <name type="ordered locus">GBAA_0822</name>
    <name type="ordered locus">BAS0783</name>
</gene>
<feature type="chain" id="PRO_0000249603" description="N-acetylmuramic acid 6-phosphate etherase">
    <location>
        <begin position="1"/>
        <end position="294"/>
    </location>
</feature>
<feature type="domain" description="SIS" evidence="1">
    <location>
        <begin position="54"/>
        <end position="217"/>
    </location>
</feature>
<feature type="active site" description="Proton donor" evidence="1">
    <location>
        <position position="82"/>
    </location>
</feature>
<feature type="active site" evidence="1">
    <location>
        <position position="113"/>
    </location>
</feature>
<comment type="function">
    <text evidence="1">Specifically catalyzes the cleavage of the D-lactyl ether substituent of MurNAc 6-phosphate, producing GlcNAc 6-phosphate and D-lactate.</text>
</comment>
<comment type="catalytic activity">
    <reaction evidence="1">
        <text>N-acetyl-D-muramate 6-phosphate + H2O = N-acetyl-D-glucosamine 6-phosphate + (R)-lactate</text>
        <dbReference type="Rhea" id="RHEA:26410"/>
        <dbReference type="ChEBI" id="CHEBI:15377"/>
        <dbReference type="ChEBI" id="CHEBI:16004"/>
        <dbReference type="ChEBI" id="CHEBI:57513"/>
        <dbReference type="ChEBI" id="CHEBI:58722"/>
        <dbReference type="EC" id="4.2.1.126"/>
    </reaction>
</comment>
<comment type="pathway">
    <text evidence="1">Amino-sugar metabolism; N-acetylmuramate degradation.</text>
</comment>
<comment type="subunit">
    <text evidence="1">Homodimer.</text>
</comment>
<comment type="miscellaneous">
    <text evidence="1">A lyase-type mechanism (elimination/hydration) is suggested for the cleavage of the lactyl ether bond of MurNAc 6-phosphate, with the formation of an alpha,beta-unsaturated aldehyde intermediate with (E)-stereochemistry, followed by the syn addition of water to give product.</text>
</comment>
<comment type="similarity">
    <text evidence="1">Belongs to the GCKR-like family. MurNAc-6-P etherase subfamily.</text>
</comment>